<organism>
    <name type="scientific">Escherichia coli O6:H1 (strain CFT073 / ATCC 700928 / UPEC)</name>
    <dbReference type="NCBI Taxonomy" id="199310"/>
    <lineage>
        <taxon>Bacteria</taxon>
        <taxon>Pseudomonadati</taxon>
        <taxon>Pseudomonadota</taxon>
        <taxon>Gammaproteobacteria</taxon>
        <taxon>Enterobacterales</taxon>
        <taxon>Enterobacteriaceae</taxon>
        <taxon>Escherichia</taxon>
    </lineage>
</organism>
<keyword id="KW-0029">Amino-acid transport</keyword>
<keyword id="KW-0997">Cell inner membrane</keyword>
<keyword id="KW-1003">Cell membrane</keyword>
<keyword id="KW-0472">Membrane</keyword>
<keyword id="KW-1185">Reference proteome</keyword>
<keyword id="KW-0769">Symport</keyword>
<keyword id="KW-0812">Transmembrane</keyword>
<keyword id="KW-1133">Transmembrane helix</keyword>
<keyword id="KW-0813">Transport</keyword>
<protein>
    <recommendedName>
        <fullName>D-serine/D-alanine/glycine transporter</fullName>
    </recommendedName>
</protein>
<accession>A0A0H2VDI7</accession>
<sequence>MVDQVKVVADDQAPAEQSLRRNLTNRHIQLIAIGGAIGTGLFMGSGKTISLAGPSIIFVYMIIGFMLFFVMRAMGELLLSNLEYKSFSDFASDLLGPWAGYFTGWTYWFCWVVTGMADVVAITAYAQFWFPGLSDWVASLSVIILLLVLNLATVKMFGEMEFWFAMIKIVAIVSLIVVGLVMVAMHFQSPTGVEASFAHLWNDGGWFPKGLSGFFAGFQIAVFAFVGIELVGTTAAETKDPEKSLPRAINSIPIRIIMFYVFSLIVIMSVTPWSSVVPEKSPFVELFVLVGLPAAASVINFVVLTSAASSANSGVFSTSRMLFGLAQEGVAPKAFAKLSKRAVPAKGLTFSCICLLGGVVMLYVNPSVIGAFTMITTVSAILFMFVWTIILCSYLVYRKQRPHLHEKSIYKMPLGKLMCWVCMAFFVFVLVLLTLEDDTRQALLVTPLWFIALGLGWLFIGKKRAAELRK</sequence>
<dbReference type="EMBL" id="AE014075">
    <property type="protein sequence ID" value="AAN83728.1"/>
    <property type="molecule type" value="Genomic_DNA"/>
</dbReference>
<dbReference type="RefSeq" id="WP_000228366.1">
    <property type="nucleotide sequence ID" value="NZ_CP051263.1"/>
</dbReference>
<dbReference type="SMR" id="A0A0H2VDI7"/>
<dbReference type="STRING" id="199310.c5307"/>
<dbReference type="KEGG" id="ecc:c5307"/>
<dbReference type="eggNOG" id="COG1113">
    <property type="taxonomic scope" value="Bacteria"/>
</dbReference>
<dbReference type="HOGENOM" id="CLU_007946_9_3_6"/>
<dbReference type="Proteomes" id="UP000001410">
    <property type="component" value="Chromosome"/>
</dbReference>
<dbReference type="GO" id="GO:0005886">
    <property type="term" value="C:plasma membrane"/>
    <property type="evidence" value="ECO:0007669"/>
    <property type="project" value="UniProtKB-SubCell"/>
</dbReference>
<dbReference type="GO" id="GO:0015293">
    <property type="term" value="F:symporter activity"/>
    <property type="evidence" value="ECO:0007669"/>
    <property type="project" value="UniProtKB-KW"/>
</dbReference>
<dbReference type="GO" id="GO:0006865">
    <property type="term" value="P:amino acid transport"/>
    <property type="evidence" value="ECO:0007669"/>
    <property type="project" value="UniProtKB-KW"/>
</dbReference>
<dbReference type="FunFam" id="1.20.1740.10:FF:000001">
    <property type="entry name" value="Amino acid permease"/>
    <property type="match status" value="1"/>
</dbReference>
<dbReference type="Gene3D" id="1.20.1740.10">
    <property type="entry name" value="Amino acid/polyamine transporter I"/>
    <property type="match status" value="1"/>
</dbReference>
<dbReference type="InterPro" id="IPR004841">
    <property type="entry name" value="AA-permease/SLC12A_dom"/>
</dbReference>
<dbReference type="InterPro" id="IPR004840">
    <property type="entry name" value="Amino_acid_permease_CS"/>
</dbReference>
<dbReference type="NCBIfam" id="NF008272">
    <property type="entry name" value="PRK11049.1"/>
    <property type="match status" value="1"/>
</dbReference>
<dbReference type="PANTHER" id="PTHR43495:SF2">
    <property type="entry name" value="D-SERINE_D-ALANINE_GLYCINE TRANSPORTER"/>
    <property type="match status" value="1"/>
</dbReference>
<dbReference type="PANTHER" id="PTHR43495">
    <property type="entry name" value="GABA PERMEASE"/>
    <property type="match status" value="1"/>
</dbReference>
<dbReference type="Pfam" id="PF00324">
    <property type="entry name" value="AA_permease"/>
    <property type="match status" value="1"/>
</dbReference>
<dbReference type="PIRSF" id="PIRSF006060">
    <property type="entry name" value="AA_transporter"/>
    <property type="match status" value="1"/>
</dbReference>
<dbReference type="PROSITE" id="PS00218">
    <property type="entry name" value="AMINO_ACID_PERMEASE_1"/>
    <property type="match status" value="1"/>
</dbReference>
<evidence type="ECO:0000250" key="1">
    <source>
        <dbReference type="UniProtKB" id="P0AAE0"/>
    </source>
</evidence>
<evidence type="ECO:0000255" key="2"/>
<evidence type="ECO:0000269" key="3">
    <source>
    </source>
</evidence>
<evidence type="ECO:0000269" key="4">
    <source>
    </source>
</evidence>
<evidence type="ECO:0000305" key="5"/>
<evidence type="ECO:0000305" key="6">
    <source>
    </source>
</evidence>
<evidence type="ECO:0000305" key="7">
    <source>
    </source>
</evidence>
<reference key="1">
    <citation type="journal article" date="2002" name="Proc. Natl. Acad. Sci. U.S.A.">
        <title>Extensive mosaic structure revealed by the complete genome sequence of uropathogenic Escherichia coli.</title>
        <authorList>
            <person name="Welch R.A."/>
            <person name="Burland V."/>
            <person name="Plunkett G. III"/>
            <person name="Redford P."/>
            <person name="Roesch P."/>
            <person name="Rasko D."/>
            <person name="Buckles E.L."/>
            <person name="Liou S.-R."/>
            <person name="Boutin A."/>
            <person name="Hackett J."/>
            <person name="Stroud D."/>
            <person name="Mayhew G.F."/>
            <person name="Rose D.J."/>
            <person name="Zhou S."/>
            <person name="Schwartz D.C."/>
            <person name="Perna N.T."/>
            <person name="Mobley H.L.T."/>
            <person name="Donnenberg M.S."/>
            <person name="Blattner F.R."/>
        </authorList>
    </citation>
    <scope>NUCLEOTIDE SEQUENCE [LARGE SCALE GENOMIC DNA]</scope>
    <source>
        <strain>CFT073 / ATCC 700928 / UPEC</strain>
    </source>
</reference>
<reference key="2">
    <citation type="journal article" date="2006" name="J. Bacteriol.">
        <title>DsdX is the second D-serine transporter in uropathogenic Escherichia coli clinical isolate CFT073.</title>
        <authorList>
            <person name="Anfora A.T."/>
            <person name="Welch R.A."/>
        </authorList>
    </citation>
    <scope>FUNCTION</scope>
    <scope>ACTIVITY REGULATION</scope>
    <scope>BIOPHYSICOCHEMICAL PROPERTIES</scope>
    <scope>DISRUPTION PHENOTYPE</scope>
    <source>
        <strain>CFT073 / ATCC 700928 / UPEC</strain>
    </source>
</reference>
<reference key="3">
    <citation type="journal article" date="2013" name="J. Bacteriol.">
        <title>Characterization of Escherichia coli D-cycloserine transport and resistant mutants.</title>
        <authorList>
            <person name="Baisa G."/>
            <person name="Stabo N.J."/>
            <person name="Welch R.A."/>
        </authorList>
    </citation>
    <scope>FUNCTION</scope>
    <scope>DISRUPTION PHENOTYPE</scope>
    <source>
        <strain>CFT073 / ATCC 700928 / UPEC</strain>
    </source>
</reference>
<comment type="function">
    <text evidence="3 4">Permease that is involved in the transport across the cytoplasmic membrane of D-alanine, D-serine and glycine (PubMed:16952954, PubMed:23316042). Is the only transporter of D-alanine (PubMed:16952954). Transports D-serine less efficiently than DsdX (PubMed:16952954). In addition, in minimal media, transports the broad spectrum antibiotic D-cycloserine into the cell (PubMed:23316042). Transports D-cycloserine only in minimal media, and not in a complex medium, suggesting that CycA does not play a role in D-cycloserine transport when E.coli is grown in a complex or biologically relevant medium, probably due to competition from other CycA substrates present in the medium (PubMed:23316042).</text>
</comment>
<comment type="catalytic activity">
    <reaction evidence="6 7">
        <text>D-alanine(in) + H(+)(in) = D-alanine(out) + H(+)(out)</text>
        <dbReference type="Rhea" id="RHEA:28903"/>
        <dbReference type="ChEBI" id="CHEBI:15378"/>
        <dbReference type="ChEBI" id="CHEBI:57416"/>
    </reaction>
    <physiologicalReaction direction="right-to-left" evidence="6 7">
        <dbReference type="Rhea" id="RHEA:28905"/>
    </physiologicalReaction>
</comment>
<comment type="catalytic activity">
    <reaction evidence="6">
        <text>D-serine(out) + H(+)(out) = D-serine(in) + H(+)(in)</text>
        <dbReference type="Rhea" id="RHEA:70647"/>
        <dbReference type="ChEBI" id="CHEBI:15378"/>
        <dbReference type="ChEBI" id="CHEBI:35247"/>
    </reaction>
    <physiologicalReaction direction="left-to-right" evidence="6">
        <dbReference type="Rhea" id="RHEA:70648"/>
    </physiologicalReaction>
</comment>
<comment type="catalytic activity">
    <reaction evidence="6 7">
        <text>glycine(in) + H(+)(in) = glycine(out) + H(+)(out)</text>
        <dbReference type="Rhea" id="RHEA:28899"/>
        <dbReference type="ChEBI" id="CHEBI:15378"/>
        <dbReference type="ChEBI" id="CHEBI:57305"/>
    </reaction>
    <physiologicalReaction direction="right-to-left" evidence="6 7">
        <dbReference type="Rhea" id="RHEA:28901"/>
    </physiologicalReaction>
</comment>
<comment type="catalytic activity">
    <reaction evidence="7">
        <text>D-cycloserine(in) + H(+)(in) = D-cycloserine(out) + H(+)(out)</text>
        <dbReference type="Rhea" id="RHEA:70703"/>
        <dbReference type="ChEBI" id="CHEBI:15378"/>
        <dbReference type="ChEBI" id="CHEBI:75929"/>
    </reaction>
    <physiologicalReaction direction="right-to-left" evidence="7">
        <dbReference type="Rhea" id="RHEA:70705"/>
    </physiologicalReaction>
</comment>
<comment type="activity regulation">
    <text evidence="3">Uptake of D-serine is inhibited by D-alanine, D-cycloserine, glycine and at high concentrations of D-threonine.</text>
</comment>
<comment type="biophysicochemical properties">
    <kinetics>
        <KM evidence="3">82.4 uM for D-serine</KM>
        <Vmax evidence="3">58.9 nmol/min/mg enzyme with D-serine as substrate</Vmax>
    </kinetics>
</comment>
<comment type="subcellular location">
    <subcellularLocation>
        <location evidence="1">Cell inner membrane</location>
        <topology evidence="2">Multi-pass membrane protein</topology>
    </subcellularLocation>
</comment>
<comment type="disruption phenotype">
    <text evidence="3 4">Single deletion, grows on D-serine or D-serine plus glycerol but not D-alanine. A double dsdX-cycA deletion grows in D-serine plus glycerol, but not D-serine or D-alanine alone, growth on D-serine (but not D-alanine) is restored by dsdX (PubMed:16952954). Mutant exhibits increased resistance to D-cycloserine when grown in a minimal medium, but no change in D-cycloserine sensitivity compared to its parental strain when grown in a complex medium or human urine (PubMed:23316042).</text>
</comment>
<comment type="miscellaneous">
    <text evidence="6">E.coli CFT073, a uropathogenic strain (UPEC), was originally isolated from urine, which has a high concentration of D-serine. D-serine is toxic to bacteria. The abililty to take up D-serine coupled with the activity of D-serine dehydratase (dsdA) may allow use of this amino acid as a carbon source in a sugar-poor environment.</text>
</comment>
<comment type="similarity">
    <text evidence="5">Belongs to the amino acid-polyamine-organocation (APC) superfamily. Amino acid transporter (AAT) (TC 2.A.3.1) family.</text>
</comment>
<feature type="chain" id="PRO_0000439180" description="D-serine/D-alanine/glycine transporter">
    <location>
        <begin position="1"/>
        <end position="470"/>
    </location>
</feature>
<feature type="transmembrane region" description="Helical" evidence="2">
    <location>
        <begin position="30"/>
        <end position="50"/>
    </location>
</feature>
<feature type="transmembrane region" description="Helical" evidence="2">
    <location>
        <begin position="51"/>
        <end position="71"/>
    </location>
</feature>
<feature type="transmembrane region" description="Helical" evidence="2">
    <location>
        <begin position="102"/>
        <end position="122"/>
    </location>
</feature>
<feature type="transmembrane region" description="Helical" evidence="2">
    <location>
        <begin position="128"/>
        <end position="148"/>
    </location>
</feature>
<feature type="transmembrane region" description="Helical" evidence="2">
    <location>
        <begin position="162"/>
        <end position="182"/>
    </location>
</feature>
<feature type="transmembrane region" description="Helical" evidence="2">
    <location>
        <begin position="211"/>
        <end position="231"/>
    </location>
</feature>
<feature type="transmembrane region" description="Helical" evidence="2">
    <location>
        <begin position="256"/>
        <end position="276"/>
    </location>
</feature>
<feature type="transmembrane region" description="Helical" evidence="2">
    <location>
        <begin position="283"/>
        <end position="303"/>
    </location>
</feature>
<feature type="transmembrane region" description="Helical" evidence="2">
    <location>
        <begin position="350"/>
        <end position="370"/>
    </location>
</feature>
<feature type="transmembrane region" description="Helical" evidence="2">
    <location>
        <begin position="371"/>
        <end position="391"/>
    </location>
</feature>
<feature type="transmembrane region" description="Helical" evidence="2">
    <location>
        <begin position="413"/>
        <end position="433"/>
    </location>
</feature>
<feature type="transmembrane region" description="Helical" evidence="2">
    <location>
        <begin position="441"/>
        <end position="461"/>
    </location>
</feature>
<name>CYCA_ECOL6</name>
<gene>
    <name type="primary">cycA</name>
    <name type="ordered locus">c5307</name>
</gene>
<proteinExistence type="evidence at protein level"/>